<keyword id="KW-0539">Nucleus</keyword>
<keyword id="KW-1185">Reference proteome</keyword>
<feature type="chain" id="PRO_0000369630" description="Protein NINJA homolog 1">
    <location>
        <begin position="1"/>
        <end position="451"/>
    </location>
</feature>
<feature type="region of interest" description="Disordered" evidence="1">
    <location>
        <begin position="1"/>
        <end position="223"/>
    </location>
</feature>
<feature type="region of interest" description="Disordered" evidence="1">
    <location>
        <begin position="321"/>
        <end position="346"/>
    </location>
</feature>
<feature type="region of interest" description="Disordered" evidence="1">
    <location>
        <begin position="427"/>
        <end position="451"/>
    </location>
</feature>
<feature type="compositionally biased region" description="Basic and acidic residues" evidence="1">
    <location>
        <begin position="23"/>
        <end position="35"/>
    </location>
</feature>
<feature type="compositionally biased region" description="Polar residues" evidence="1">
    <location>
        <begin position="38"/>
        <end position="49"/>
    </location>
</feature>
<feature type="compositionally biased region" description="Polar residues" evidence="1">
    <location>
        <begin position="86"/>
        <end position="103"/>
    </location>
</feature>
<feature type="compositionally biased region" description="Polar residues" evidence="1">
    <location>
        <begin position="143"/>
        <end position="153"/>
    </location>
</feature>
<feature type="compositionally biased region" description="Acidic residues" evidence="1">
    <location>
        <begin position="154"/>
        <end position="163"/>
    </location>
</feature>
<feature type="compositionally biased region" description="Low complexity" evidence="1">
    <location>
        <begin position="207"/>
        <end position="216"/>
    </location>
</feature>
<sequence>MDDENGLELSLGLSLGGTSGKSKARDAPLEPKAEPQVEESSSKGVSQTPEAPFVHYYQTNAENQEHSSKQRHSPAAPPFGNFWGQPGSSSVPVADGSNEQKPVSSKRKLLSEEISFQKKPNTAAEQPDAFSKSSDGGVKNAPISISTDDGSTGENEDVAESEAEGSNSWLVAQREDSAKGSVVNRGSDRKRSSDDAAVGFQGKRQPSFSGSESSSGKLPQGNPLSLQASNVVAVPYQVPSQVSAPPSITNASNFTPVCTVQLRPPTNNGLAVTMGSTSQVAFGYPAVQLPTLETSSSWAFGAPPQAMSSFTAKDKVERAGISQADDGKKTQEAGASSSALVEDDKKSDRALPLMGSAIRPGIAPNVKFGGSGSYPDLPWVSTTGTGPNGRTISGVTYKFGRNEVKIVCACHGTHMTPEEFMRHASADAPGQENSATLPAFPVGNQAASAQN</sequence>
<accession>Q6AT41</accession>
<accession>A0A0P0WQF0</accession>
<evidence type="ECO:0000256" key="1">
    <source>
        <dbReference type="SAM" id="MobiDB-lite"/>
    </source>
</evidence>
<evidence type="ECO:0000269" key="2">
    <source>
    </source>
</evidence>
<evidence type="ECO:0000269" key="3">
    <source>
    </source>
</evidence>
<evidence type="ECO:0000303" key="4">
    <source>
    </source>
</evidence>
<evidence type="ECO:0000303" key="5">
    <source>
    </source>
</evidence>
<evidence type="ECO:0000305" key="6"/>
<dbReference type="EMBL" id="AC144735">
    <property type="protein sequence ID" value="AAT85094.1"/>
    <property type="molecule type" value="Genomic_DNA"/>
</dbReference>
<dbReference type="EMBL" id="AP008211">
    <property type="protein sequence ID" value="BAF18210.1"/>
    <property type="molecule type" value="Genomic_DNA"/>
</dbReference>
<dbReference type="EMBL" id="AP014961">
    <property type="protein sequence ID" value="BAS95296.1"/>
    <property type="molecule type" value="Genomic_DNA"/>
</dbReference>
<dbReference type="EMBL" id="CM000142">
    <property type="protein sequence ID" value="EEE64661.1"/>
    <property type="molecule type" value="Genomic_DNA"/>
</dbReference>
<dbReference type="EMBL" id="AK073985">
    <property type="protein sequence ID" value="BAG93746.1"/>
    <property type="molecule type" value="mRNA"/>
</dbReference>
<dbReference type="RefSeq" id="NP_001389557.1">
    <property type="nucleotide sequence ID" value="NM_001402628.1"/>
</dbReference>
<dbReference type="RefSeq" id="NP_001389558.1">
    <property type="nucleotide sequence ID" value="NM_001402629.1"/>
</dbReference>
<dbReference type="RefSeq" id="XP_015639926.1">
    <property type="nucleotide sequence ID" value="XM_015784440.1"/>
</dbReference>
<dbReference type="FunCoup" id="Q6AT41">
    <property type="interactions" value="2357"/>
</dbReference>
<dbReference type="STRING" id="39947.Q6AT41"/>
<dbReference type="PaxDb" id="39947-Q6AT41"/>
<dbReference type="EnsemblPlants" id="Os05t0558800-01">
    <property type="protein sequence ID" value="Os05t0558800-01"/>
    <property type="gene ID" value="Os05g0558800"/>
</dbReference>
<dbReference type="EnsemblPlants" id="Os05t0558800-02">
    <property type="protein sequence ID" value="Os05t0558800-02"/>
    <property type="gene ID" value="Os05g0558800"/>
</dbReference>
<dbReference type="GeneID" id="4339584"/>
<dbReference type="Gramene" id="Os05t0558800-01">
    <property type="protein sequence ID" value="Os05t0558800-01"/>
    <property type="gene ID" value="Os05g0558800"/>
</dbReference>
<dbReference type="Gramene" id="Os05t0558800-02">
    <property type="protein sequence ID" value="Os05t0558800-02"/>
    <property type="gene ID" value="Os05g0558800"/>
</dbReference>
<dbReference type="KEGG" id="dosa:Os05g0558800"/>
<dbReference type="eggNOG" id="ENOG502QSTR">
    <property type="taxonomic scope" value="Eukaryota"/>
</dbReference>
<dbReference type="HOGENOM" id="CLU_049096_0_0_1"/>
<dbReference type="InParanoid" id="Q6AT41"/>
<dbReference type="OMA" id="PVMFGYP"/>
<dbReference type="OrthoDB" id="1936656at2759"/>
<dbReference type="PlantReactome" id="R-OSA-6787011">
    <property type="pathway name" value="Jasmonic acid signaling"/>
</dbReference>
<dbReference type="Proteomes" id="UP000000763">
    <property type="component" value="Chromosome 5"/>
</dbReference>
<dbReference type="Proteomes" id="UP000007752">
    <property type="component" value="Chromosome 5"/>
</dbReference>
<dbReference type="Proteomes" id="UP000059680">
    <property type="component" value="Chromosome 5"/>
</dbReference>
<dbReference type="ExpressionAtlas" id="Q6AT41">
    <property type="expression patterns" value="baseline and differential"/>
</dbReference>
<dbReference type="GO" id="GO:0005634">
    <property type="term" value="C:nucleus"/>
    <property type="evidence" value="ECO:0000318"/>
    <property type="project" value="GO_Central"/>
</dbReference>
<dbReference type="GO" id="GO:0009867">
    <property type="term" value="P:jasmonic acid mediated signaling pathway"/>
    <property type="evidence" value="ECO:0000318"/>
    <property type="project" value="GO_Central"/>
</dbReference>
<dbReference type="GO" id="GO:0045892">
    <property type="term" value="P:negative regulation of DNA-templated transcription"/>
    <property type="evidence" value="ECO:0000318"/>
    <property type="project" value="GO_Central"/>
</dbReference>
<dbReference type="InterPro" id="IPR031307">
    <property type="entry name" value="Ninja_fam"/>
</dbReference>
<dbReference type="InterPro" id="IPR012463">
    <property type="entry name" value="Ninja_motif"/>
</dbReference>
<dbReference type="PANTHER" id="PTHR31413">
    <property type="entry name" value="AFP HOMOLOG 2"/>
    <property type="match status" value="1"/>
</dbReference>
<dbReference type="PANTHER" id="PTHR31413:SF12">
    <property type="entry name" value="AFP HOMOLOG 2"/>
    <property type="match status" value="1"/>
</dbReference>
<dbReference type="Pfam" id="PF07897">
    <property type="entry name" value="EAR"/>
    <property type="match status" value="1"/>
</dbReference>
<protein>
    <recommendedName>
        <fullName evidence="4">Protein NINJA homolog 1</fullName>
        <shortName evidence="4">OsNINJA1</shortName>
    </recommendedName>
    <alternativeName>
        <fullName evidence="6">Ninja-family protein NINJA1</fullName>
    </alternativeName>
    <alternativeName>
        <fullName evidence="5">Protein NINJA homolog</fullName>
        <shortName evidence="5">OsNINJA</shortName>
    </alternativeName>
    <alternativeName>
        <fullName evidence="4">Protein NINJA homolog 2</fullName>
        <shortName evidence="4">OsNINJA2</shortName>
    </alternativeName>
</protein>
<name>NNJA4_ORYSJ</name>
<proteinExistence type="evidence at protein level"/>
<reference key="1">
    <citation type="journal article" date="2005" name="Mol. Genet. Genomics">
        <title>A fine physical map of the rice chromosome 5.</title>
        <authorList>
            <person name="Cheng C.-H."/>
            <person name="Chung M.C."/>
            <person name="Liu S.-M."/>
            <person name="Chen S.-K."/>
            <person name="Kao F.Y."/>
            <person name="Lin S.-J."/>
            <person name="Hsiao S.-H."/>
            <person name="Tseng I.C."/>
            <person name="Hsing Y.-I.C."/>
            <person name="Wu H.-P."/>
            <person name="Chen C.-S."/>
            <person name="Shaw J.-F."/>
            <person name="Wu J."/>
            <person name="Matsumoto T."/>
            <person name="Sasaki T."/>
            <person name="Chen H.-C."/>
            <person name="Chow T.-Y."/>
        </authorList>
    </citation>
    <scope>NUCLEOTIDE SEQUENCE [LARGE SCALE GENOMIC DNA]</scope>
    <source>
        <strain>cv. Nipponbare</strain>
    </source>
</reference>
<reference key="2">
    <citation type="journal article" date="2005" name="Nature">
        <title>The map-based sequence of the rice genome.</title>
        <authorList>
            <consortium name="International rice genome sequencing project (IRGSP)"/>
        </authorList>
    </citation>
    <scope>NUCLEOTIDE SEQUENCE [LARGE SCALE GENOMIC DNA]</scope>
    <source>
        <strain>cv. Nipponbare</strain>
    </source>
</reference>
<reference key="3">
    <citation type="journal article" date="2008" name="Nucleic Acids Res.">
        <title>The rice annotation project database (RAP-DB): 2008 update.</title>
        <authorList>
            <consortium name="The rice annotation project (RAP)"/>
        </authorList>
    </citation>
    <scope>GENOME REANNOTATION</scope>
    <source>
        <strain>cv. Nipponbare</strain>
    </source>
</reference>
<reference key="4">
    <citation type="journal article" date="2013" name="Rice">
        <title>Improvement of the Oryza sativa Nipponbare reference genome using next generation sequence and optical map data.</title>
        <authorList>
            <person name="Kawahara Y."/>
            <person name="de la Bastide M."/>
            <person name="Hamilton J.P."/>
            <person name="Kanamori H."/>
            <person name="McCombie W.R."/>
            <person name="Ouyang S."/>
            <person name="Schwartz D.C."/>
            <person name="Tanaka T."/>
            <person name="Wu J."/>
            <person name="Zhou S."/>
            <person name="Childs K.L."/>
            <person name="Davidson R.M."/>
            <person name="Lin H."/>
            <person name="Quesada-Ocampo L."/>
            <person name="Vaillancourt B."/>
            <person name="Sakai H."/>
            <person name="Lee S.S."/>
            <person name="Kim J."/>
            <person name="Numa H."/>
            <person name="Itoh T."/>
            <person name="Buell C.R."/>
            <person name="Matsumoto T."/>
        </authorList>
    </citation>
    <scope>GENOME REANNOTATION</scope>
    <source>
        <strain>cv. Nipponbare</strain>
    </source>
</reference>
<reference key="5">
    <citation type="journal article" date="2005" name="PLoS Biol.">
        <title>The genomes of Oryza sativa: a history of duplications.</title>
        <authorList>
            <person name="Yu J."/>
            <person name="Wang J."/>
            <person name="Lin W."/>
            <person name="Li S."/>
            <person name="Li H."/>
            <person name="Zhou J."/>
            <person name="Ni P."/>
            <person name="Dong W."/>
            <person name="Hu S."/>
            <person name="Zeng C."/>
            <person name="Zhang J."/>
            <person name="Zhang Y."/>
            <person name="Li R."/>
            <person name="Xu Z."/>
            <person name="Li S."/>
            <person name="Li X."/>
            <person name="Zheng H."/>
            <person name="Cong L."/>
            <person name="Lin L."/>
            <person name="Yin J."/>
            <person name="Geng J."/>
            <person name="Li G."/>
            <person name="Shi J."/>
            <person name="Liu J."/>
            <person name="Lv H."/>
            <person name="Li J."/>
            <person name="Wang J."/>
            <person name="Deng Y."/>
            <person name="Ran L."/>
            <person name="Shi X."/>
            <person name="Wang X."/>
            <person name="Wu Q."/>
            <person name="Li C."/>
            <person name="Ren X."/>
            <person name="Wang J."/>
            <person name="Wang X."/>
            <person name="Li D."/>
            <person name="Liu D."/>
            <person name="Zhang X."/>
            <person name="Ji Z."/>
            <person name="Zhao W."/>
            <person name="Sun Y."/>
            <person name="Zhang Z."/>
            <person name="Bao J."/>
            <person name="Han Y."/>
            <person name="Dong L."/>
            <person name="Ji J."/>
            <person name="Chen P."/>
            <person name="Wu S."/>
            <person name="Liu J."/>
            <person name="Xiao Y."/>
            <person name="Bu D."/>
            <person name="Tan J."/>
            <person name="Yang L."/>
            <person name="Ye C."/>
            <person name="Zhang J."/>
            <person name="Xu J."/>
            <person name="Zhou Y."/>
            <person name="Yu Y."/>
            <person name="Zhang B."/>
            <person name="Zhuang S."/>
            <person name="Wei H."/>
            <person name="Liu B."/>
            <person name="Lei M."/>
            <person name="Yu H."/>
            <person name="Li Y."/>
            <person name="Xu H."/>
            <person name="Wei S."/>
            <person name="He X."/>
            <person name="Fang L."/>
            <person name="Zhang Z."/>
            <person name="Zhang Y."/>
            <person name="Huang X."/>
            <person name="Su Z."/>
            <person name="Tong W."/>
            <person name="Li J."/>
            <person name="Tong Z."/>
            <person name="Li S."/>
            <person name="Ye J."/>
            <person name="Wang L."/>
            <person name="Fang L."/>
            <person name="Lei T."/>
            <person name="Chen C.-S."/>
            <person name="Chen H.-C."/>
            <person name="Xu Z."/>
            <person name="Li H."/>
            <person name="Huang H."/>
            <person name="Zhang F."/>
            <person name="Xu H."/>
            <person name="Li N."/>
            <person name="Zhao C."/>
            <person name="Li S."/>
            <person name="Dong L."/>
            <person name="Huang Y."/>
            <person name="Li L."/>
            <person name="Xi Y."/>
            <person name="Qi Q."/>
            <person name="Li W."/>
            <person name="Zhang B."/>
            <person name="Hu W."/>
            <person name="Zhang Y."/>
            <person name="Tian X."/>
            <person name="Jiao Y."/>
            <person name="Liang X."/>
            <person name="Jin J."/>
            <person name="Gao L."/>
            <person name="Zheng W."/>
            <person name="Hao B."/>
            <person name="Liu S.-M."/>
            <person name="Wang W."/>
            <person name="Yuan L."/>
            <person name="Cao M."/>
            <person name="McDermott J."/>
            <person name="Samudrala R."/>
            <person name="Wang J."/>
            <person name="Wong G.K.-S."/>
            <person name="Yang H."/>
        </authorList>
    </citation>
    <scope>NUCLEOTIDE SEQUENCE [LARGE SCALE GENOMIC DNA]</scope>
    <source>
        <strain>cv. Nipponbare</strain>
    </source>
</reference>
<reference key="6">
    <citation type="journal article" date="2003" name="Science">
        <title>Collection, mapping, and annotation of over 28,000 cDNA clones from japonica rice.</title>
        <authorList>
            <consortium name="The rice full-length cDNA consortium"/>
        </authorList>
    </citation>
    <scope>NUCLEOTIDE SEQUENCE [LARGE SCALE MRNA]</scope>
    <source>
        <strain>cv. Nipponbare</strain>
    </source>
</reference>
<reference key="7">
    <citation type="journal article" date="2012" name="Plant Cell Physiol.">
        <title>Involvement of OsJAZ8 in jasmonate-induced resistance to bacterial blight in rice.</title>
        <authorList>
            <person name="Yamada S."/>
            <person name="Kano A."/>
            <person name="Tamaoki D."/>
            <person name="Miyamoto A."/>
            <person name="Shishido H."/>
            <person name="Miyoshi S."/>
            <person name="Taniguchi S."/>
            <person name="Akimitsu K."/>
            <person name="Gomi K."/>
        </authorList>
    </citation>
    <scope>INTERACTION WITH TIFY10C/JAZ8</scope>
</reference>
<reference key="8">
    <citation type="journal article" date="2015" name="Plant Sci.">
        <title>OsJAZ9 acts as a transcriptional regulator in jasmonate signaling and modulates salt stress tolerance in rice.</title>
        <authorList>
            <person name="Wu H."/>
            <person name="Ye H."/>
            <person name="Yao R."/>
            <person name="Zhang T."/>
            <person name="Xiong L."/>
        </authorList>
    </citation>
    <scope>INTERACTION WITH TIFY11A/JAZ9</scope>
    <scope>SUBCELLULAR LOCATION</scope>
</reference>
<gene>
    <name evidence="4" type="primary">NINJA1</name>
    <name evidence="5" type="synonym">NINJA</name>
    <name evidence="4" type="synonym">NINJA2</name>
    <name type="ordered locus">Os05g0558800</name>
    <name type="ordered locus">LOC_Os05g48500</name>
    <name type="ORF">OsJ_19515</name>
    <name type="ORF">OSJNBa0001A14.6</name>
</gene>
<comment type="subunit">
    <text evidence="2 3">Interacts with TIFY10C/JAZ8 (PubMed:23104764). Interacts with TIFY11A/JAZ9 (PubMed:25617318).</text>
</comment>
<comment type="subcellular location">
    <subcellularLocation>
        <location evidence="3">Nucleus</location>
    </subcellularLocation>
</comment>
<comment type="similarity">
    <text evidence="6">Belongs to the Ninja family.</text>
</comment>
<organism>
    <name type="scientific">Oryza sativa subsp. japonica</name>
    <name type="common">Rice</name>
    <dbReference type="NCBI Taxonomy" id="39947"/>
    <lineage>
        <taxon>Eukaryota</taxon>
        <taxon>Viridiplantae</taxon>
        <taxon>Streptophyta</taxon>
        <taxon>Embryophyta</taxon>
        <taxon>Tracheophyta</taxon>
        <taxon>Spermatophyta</taxon>
        <taxon>Magnoliopsida</taxon>
        <taxon>Liliopsida</taxon>
        <taxon>Poales</taxon>
        <taxon>Poaceae</taxon>
        <taxon>BOP clade</taxon>
        <taxon>Oryzoideae</taxon>
        <taxon>Oryzeae</taxon>
        <taxon>Oryzinae</taxon>
        <taxon>Oryza</taxon>
        <taxon>Oryza sativa</taxon>
    </lineage>
</organism>